<protein>
    <recommendedName>
        <fullName evidence="1">N5-carboxyaminoimidazole ribonucleotide synthase</fullName>
        <shortName evidence="1">N5-CAIR synthase</shortName>
        <ecNumber evidence="1">6.3.4.18</ecNumber>
    </recommendedName>
    <alternativeName>
        <fullName evidence="1">5-(carboxyamino)imidazole ribonucleotide synthetase</fullName>
    </alternativeName>
</protein>
<evidence type="ECO:0000255" key="1">
    <source>
        <dbReference type="HAMAP-Rule" id="MF_01928"/>
    </source>
</evidence>
<evidence type="ECO:0000256" key="2">
    <source>
        <dbReference type="SAM" id="MobiDB-lite"/>
    </source>
</evidence>
<proteinExistence type="inferred from homology"/>
<comment type="function">
    <text evidence="1">Catalyzes the ATP-dependent conversion of 5-aminoimidazole ribonucleotide (AIR) and HCO(3)(-) to N5-carboxyaminoimidazole ribonucleotide (N5-CAIR).</text>
</comment>
<comment type="catalytic activity">
    <reaction evidence="1">
        <text>5-amino-1-(5-phospho-beta-D-ribosyl)imidazole + hydrogencarbonate + ATP = 5-carboxyamino-1-(5-phospho-D-ribosyl)imidazole + ADP + phosphate + 2 H(+)</text>
        <dbReference type="Rhea" id="RHEA:19317"/>
        <dbReference type="ChEBI" id="CHEBI:15378"/>
        <dbReference type="ChEBI" id="CHEBI:17544"/>
        <dbReference type="ChEBI" id="CHEBI:30616"/>
        <dbReference type="ChEBI" id="CHEBI:43474"/>
        <dbReference type="ChEBI" id="CHEBI:58730"/>
        <dbReference type="ChEBI" id="CHEBI:137981"/>
        <dbReference type="ChEBI" id="CHEBI:456216"/>
        <dbReference type="EC" id="6.3.4.18"/>
    </reaction>
</comment>
<comment type="pathway">
    <text evidence="1">Purine metabolism; IMP biosynthesis via de novo pathway; 5-amino-1-(5-phospho-D-ribosyl)imidazole-4-carboxylate from 5-amino-1-(5-phospho-D-ribosyl)imidazole (N5-CAIR route): step 1/2.</text>
</comment>
<comment type="subunit">
    <text evidence="1">Homodimer.</text>
</comment>
<comment type="similarity">
    <text evidence="1">Belongs to the PurK/PurT family.</text>
</comment>
<accession>Q44678</accession>
<feature type="chain" id="PRO_0000074996" description="N5-carboxyaminoimidazole ribonucleotide synthase">
    <location>
        <begin position="1"/>
        <end position="413"/>
    </location>
</feature>
<feature type="domain" description="ATP-grasp" evidence="1">
    <location>
        <begin position="126"/>
        <end position="319"/>
    </location>
</feature>
<feature type="region of interest" description="Disordered" evidence="2">
    <location>
        <begin position="1"/>
        <end position="21"/>
    </location>
</feature>
<feature type="binding site" evidence="1">
    <location>
        <position position="122"/>
    </location>
    <ligand>
        <name>ATP</name>
        <dbReference type="ChEBI" id="CHEBI:30616"/>
    </ligand>
</feature>
<feature type="binding site" evidence="1">
    <location>
        <position position="162"/>
    </location>
    <ligand>
        <name>ATP</name>
        <dbReference type="ChEBI" id="CHEBI:30616"/>
    </ligand>
</feature>
<feature type="binding site" evidence="1">
    <location>
        <begin position="199"/>
        <end position="202"/>
    </location>
    <ligand>
        <name>ATP</name>
        <dbReference type="ChEBI" id="CHEBI:30616"/>
    </ligand>
</feature>
<feature type="binding site" evidence="1">
    <location>
        <position position="207"/>
    </location>
    <ligand>
        <name>ATP</name>
        <dbReference type="ChEBI" id="CHEBI:30616"/>
    </ligand>
</feature>
<feature type="binding site" evidence="1">
    <location>
        <begin position="289"/>
        <end position="290"/>
    </location>
    <ligand>
        <name>ATP</name>
        <dbReference type="ChEBI" id="CHEBI:30616"/>
    </ligand>
</feature>
<organism>
    <name type="scientific">Corynebacterium ammoniagenes</name>
    <name type="common">Brevibacterium ammoniagenes</name>
    <dbReference type="NCBI Taxonomy" id="1697"/>
    <lineage>
        <taxon>Bacteria</taxon>
        <taxon>Bacillati</taxon>
        <taxon>Actinomycetota</taxon>
        <taxon>Actinomycetes</taxon>
        <taxon>Mycobacteriales</taxon>
        <taxon>Corynebacteriaceae</taxon>
        <taxon>Corynebacterium</taxon>
    </lineage>
</organism>
<name>PURK_CORAM</name>
<sequence length="413" mass="44111">MKRVSEQAGNPDGNPQAHVPGMPVIAVIGDGQLARMMQTAAIELGQSLRLLAGARDASAAQVCADVVLGDYTNYDDLLKAVDGATAVTFDHEHVPNEHLTALIDAGYNDQPQPAALINAQDKLVMRERLAELGAPVPRFAPIESAQDAYDFWTLTSGQVCLKARRGGYDGKGVWFPNNESELTALVSDLSRRGVALMAEEKVGWSRELSVLVARTPSGEVATWPLTESVQRNGVCAEAVAPAPGVDPQLQQRAETLGEKIATELGVTGVLAVELFAFANESGAEDIAVNELAMRPHNTGHWTLVGSVTSQFEQHLRAVMDEPLGDTSTLAPVTVMANVLGADEDQRCQWASVPRSGAPVPATKVHLYGKGIAQGRKIGHVNLTGEDEEATRRDARLAADFLVNAAWSDNWSAK</sequence>
<gene>
    <name evidence="1" type="primary">purK</name>
</gene>
<keyword id="KW-0067">ATP-binding</keyword>
<keyword id="KW-0436">Ligase</keyword>
<keyword id="KW-0547">Nucleotide-binding</keyword>
<keyword id="KW-0658">Purine biosynthesis</keyword>
<reference key="1">
    <citation type="journal article" date="1996" name="FEMS Microbiol. Lett.">
        <title>Genomic organization of purK and purE in Brevibacterium ammoniagenes ATCC 6872: purE locus provides a clue for genomic evolution.</title>
        <authorList>
            <person name="Chung S.O."/>
            <person name="Lee J.H."/>
            <person name="Lee S.Y."/>
            <person name="Lee D.S."/>
        </authorList>
    </citation>
    <scope>NUCLEOTIDE SEQUENCE [GENOMIC DNA]</scope>
    <source>
        <strain>ATCC 6872 / DSM 20305 / IAM 1645 / KCTC 1019 / NCTC 2399</strain>
    </source>
</reference>
<dbReference type="EC" id="6.3.4.18" evidence="1"/>
<dbReference type="EMBL" id="X91189">
    <property type="protein sequence ID" value="CAA62598.1"/>
    <property type="molecule type" value="Genomic_DNA"/>
</dbReference>
<dbReference type="SMR" id="Q44678"/>
<dbReference type="UniPathway" id="UPA00074">
    <property type="reaction ID" value="UER00942"/>
</dbReference>
<dbReference type="GO" id="GO:0005829">
    <property type="term" value="C:cytosol"/>
    <property type="evidence" value="ECO:0007669"/>
    <property type="project" value="TreeGrafter"/>
</dbReference>
<dbReference type="GO" id="GO:0034028">
    <property type="term" value="F:5-(carboxyamino)imidazole ribonucleotide synthase activity"/>
    <property type="evidence" value="ECO:0007669"/>
    <property type="project" value="UniProtKB-UniRule"/>
</dbReference>
<dbReference type="GO" id="GO:0005524">
    <property type="term" value="F:ATP binding"/>
    <property type="evidence" value="ECO:0007669"/>
    <property type="project" value="UniProtKB-KW"/>
</dbReference>
<dbReference type="GO" id="GO:0046872">
    <property type="term" value="F:metal ion binding"/>
    <property type="evidence" value="ECO:0007669"/>
    <property type="project" value="InterPro"/>
</dbReference>
<dbReference type="GO" id="GO:0004638">
    <property type="term" value="F:phosphoribosylaminoimidazole carboxylase activity"/>
    <property type="evidence" value="ECO:0007669"/>
    <property type="project" value="InterPro"/>
</dbReference>
<dbReference type="GO" id="GO:0006189">
    <property type="term" value="P:'de novo' IMP biosynthetic process"/>
    <property type="evidence" value="ECO:0007669"/>
    <property type="project" value="UniProtKB-UniRule"/>
</dbReference>
<dbReference type="Gene3D" id="3.40.50.20">
    <property type="match status" value="1"/>
</dbReference>
<dbReference type="Gene3D" id="3.30.1490.20">
    <property type="entry name" value="ATP-grasp fold, A domain"/>
    <property type="match status" value="1"/>
</dbReference>
<dbReference type="Gene3D" id="3.30.470.20">
    <property type="entry name" value="ATP-grasp fold, B domain"/>
    <property type="match status" value="1"/>
</dbReference>
<dbReference type="HAMAP" id="MF_01928">
    <property type="entry name" value="PurK"/>
    <property type="match status" value="1"/>
</dbReference>
<dbReference type="InterPro" id="IPR011761">
    <property type="entry name" value="ATP-grasp"/>
</dbReference>
<dbReference type="InterPro" id="IPR003135">
    <property type="entry name" value="ATP-grasp_carboxylate-amine"/>
</dbReference>
<dbReference type="InterPro" id="IPR013815">
    <property type="entry name" value="ATP_grasp_subdomain_1"/>
</dbReference>
<dbReference type="InterPro" id="IPR016185">
    <property type="entry name" value="PreATP-grasp_dom_sf"/>
</dbReference>
<dbReference type="InterPro" id="IPR005875">
    <property type="entry name" value="PurK"/>
</dbReference>
<dbReference type="InterPro" id="IPR040686">
    <property type="entry name" value="PurK_C"/>
</dbReference>
<dbReference type="InterPro" id="IPR054350">
    <property type="entry name" value="PurT/PurK_preATP-grasp"/>
</dbReference>
<dbReference type="InterPro" id="IPR011054">
    <property type="entry name" value="Rudment_hybrid_motif"/>
</dbReference>
<dbReference type="NCBIfam" id="NF004680">
    <property type="entry name" value="PRK06019.1-6"/>
    <property type="match status" value="1"/>
</dbReference>
<dbReference type="NCBIfam" id="TIGR01161">
    <property type="entry name" value="purK"/>
    <property type="match status" value="1"/>
</dbReference>
<dbReference type="PANTHER" id="PTHR11609:SF5">
    <property type="entry name" value="PHOSPHORIBOSYLAMINOIMIDAZOLE CARBOXYLASE"/>
    <property type="match status" value="1"/>
</dbReference>
<dbReference type="PANTHER" id="PTHR11609">
    <property type="entry name" value="PURINE BIOSYNTHESIS PROTEIN 6/7, PUR6/7"/>
    <property type="match status" value="1"/>
</dbReference>
<dbReference type="Pfam" id="PF02222">
    <property type="entry name" value="ATP-grasp"/>
    <property type="match status" value="1"/>
</dbReference>
<dbReference type="Pfam" id="PF17769">
    <property type="entry name" value="PurK_C"/>
    <property type="match status" value="1"/>
</dbReference>
<dbReference type="Pfam" id="PF22660">
    <property type="entry name" value="RS_preATP-grasp-like"/>
    <property type="match status" value="1"/>
</dbReference>
<dbReference type="SUPFAM" id="SSF56059">
    <property type="entry name" value="Glutathione synthetase ATP-binding domain-like"/>
    <property type="match status" value="1"/>
</dbReference>
<dbReference type="SUPFAM" id="SSF52440">
    <property type="entry name" value="PreATP-grasp domain"/>
    <property type="match status" value="1"/>
</dbReference>
<dbReference type="SUPFAM" id="SSF51246">
    <property type="entry name" value="Rudiment single hybrid motif"/>
    <property type="match status" value="1"/>
</dbReference>
<dbReference type="PROSITE" id="PS50975">
    <property type="entry name" value="ATP_GRASP"/>
    <property type="match status" value="1"/>
</dbReference>